<feature type="chain" id="PRO_0000145823" description="Tol-Pal system protein TolQ">
    <location>
        <begin position="1"/>
        <end position="230"/>
    </location>
</feature>
<feature type="transmembrane region" description="Helical" evidence="1">
    <location>
        <begin position="16"/>
        <end position="36"/>
    </location>
</feature>
<feature type="transmembrane region" description="Helical" evidence="1">
    <location>
        <begin position="139"/>
        <end position="159"/>
    </location>
</feature>
<feature type="transmembrane region" description="Helical" evidence="1">
    <location>
        <begin position="171"/>
        <end position="191"/>
    </location>
</feature>
<reference key="1">
    <citation type="journal article" date="2001" name="Nature">
        <title>Genome sequence of enterohaemorrhagic Escherichia coli O157:H7.</title>
        <authorList>
            <person name="Perna N.T."/>
            <person name="Plunkett G. III"/>
            <person name="Burland V."/>
            <person name="Mau B."/>
            <person name="Glasner J.D."/>
            <person name="Rose D.J."/>
            <person name="Mayhew G.F."/>
            <person name="Evans P.S."/>
            <person name="Gregor J."/>
            <person name="Kirkpatrick H.A."/>
            <person name="Posfai G."/>
            <person name="Hackett J."/>
            <person name="Klink S."/>
            <person name="Boutin A."/>
            <person name="Shao Y."/>
            <person name="Miller L."/>
            <person name="Grotbeck E.J."/>
            <person name="Davis N.W."/>
            <person name="Lim A."/>
            <person name="Dimalanta E.T."/>
            <person name="Potamousis K."/>
            <person name="Apodaca J."/>
            <person name="Anantharaman T.S."/>
            <person name="Lin J."/>
            <person name="Yen G."/>
            <person name="Schwartz D.C."/>
            <person name="Welch R.A."/>
            <person name="Blattner F.R."/>
        </authorList>
    </citation>
    <scope>NUCLEOTIDE SEQUENCE [LARGE SCALE GENOMIC DNA]</scope>
    <source>
        <strain>O157:H7 / EDL933 / ATCC 700927 / EHEC</strain>
    </source>
</reference>
<reference key="2">
    <citation type="journal article" date="2001" name="DNA Res.">
        <title>Complete genome sequence of enterohemorrhagic Escherichia coli O157:H7 and genomic comparison with a laboratory strain K-12.</title>
        <authorList>
            <person name="Hayashi T."/>
            <person name="Makino K."/>
            <person name="Ohnishi M."/>
            <person name="Kurokawa K."/>
            <person name="Ishii K."/>
            <person name="Yokoyama K."/>
            <person name="Han C.-G."/>
            <person name="Ohtsubo E."/>
            <person name="Nakayama K."/>
            <person name="Murata T."/>
            <person name="Tanaka M."/>
            <person name="Tobe T."/>
            <person name="Iida T."/>
            <person name="Takami H."/>
            <person name="Honda T."/>
            <person name="Sasakawa C."/>
            <person name="Ogasawara N."/>
            <person name="Yasunaga T."/>
            <person name="Kuhara S."/>
            <person name="Shiba T."/>
            <person name="Hattori M."/>
            <person name="Shinagawa H."/>
        </authorList>
    </citation>
    <scope>NUCLEOTIDE SEQUENCE [LARGE SCALE GENOMIC DNA]</scope>
    <source>
        <strain>O157:H7 / Sakai / RIMD 0509952 / EHEC</strain>
    </source>
</reference>
<comment type="function">
    <text evidence="1">Part of the Tol-Pal system, which plays a role in outer membrane invagination during cell division and is important for maintaining outer membrane integrity. Required, with TolR, for the proton motive force-dependent activation of TolA and for TolA-Pal interaction.</text>
</comment>
<comment type="subunit">
    <text evidence="1">The Tol-Pal system is composed of five core proteins: the inner membrane proteins TolA, TolQ and TolR, the periplasmic protein TolB and the outer membrane protein Pal. They form a network linking the inner and outer membranes and the peptidoglycan layer.</text>
</comment>
<comment type="subcellular location">
    <subcellularLocation>
        <location evidence="1">Cell inner membrane</location>
        <topology evidence="1">Multi-pass membrane protein</topology>
    </subcellularLocation>
</comment>
<comment type="similarity">
    <text evidence="1 2">Belongs to the ExbB/TolQ family.</text>
</comment>
<accession>P0ABV0</accession>
<accession>P05828</accession>
<organism>
    <name type="scientific">Escherichia coli O157:H7</name>
    <dbReference type="NCBI Taxonomy" id="83334"/>
    <lineage>
        <taxon>Bacteria</taxon>
        <taxon>Pseudomonadati</taxon>
        <taxon>Pseudomonadota</taxon>
        <taxon>Gammaproteobacteria</taxon>
        <taxon>Enterobacterales</taxon>
        <taxon>Enterobacteriaceae</taxon>
        <taxon>Escherichia</taxon>
    </lineage>
</organism>
<keyword id="KW-0131">Cell cycle</keyword>
<keyword id="KW-0132">Cell division</keyword>
<keyword id="KW-0997">Cell inner membrane</keyword>
<keyword id="KW-1003">Cell membrane</keyword>
<keyword id="KW-0472">Membrane</keyword>
<keyword id="KW-1185">Reference proteome</keyword>
<keyword id="KW-0812">Transmembrane</keyword>
<keyword id="KW-1133">Transmembrane helix</keyword>
<proteinExistence type="inferred from homology"/>
<name>TOLQ_ECO57</name>
<dbReference type="EMBL" id="AE005174">
    <property type="protein sequence ID" value="AAG55073.1"/>
    <property type="molecule type" value="Genomic_DNA"/>
</dbReference>
<dbReference type="EMBL" id="BA000007">
    <property type="protein sequence ID" value="BAB34195.1"/>
    <property type="molecule type" value="Genomic_DNA"/>
</dbReference>
<dbReference type="PIR" id="D90725">
    <property type="entry name" value="D90725"/>
</dbReference>
<dbReference type="PIR" id="E85576">
    <property type="entry name" value="E85576"/>
</dbReference>
<dbReference type="RefSeq" id="NP_308799.1">
    <property type="nucleotide sequence ID" value="NC_002695.1"/>
</dbReference>
<dbReference type="RefSeq" id="WP_000131314.1">
    <property type="nucleotide sequence ID" value="NZ_VOAI01000019.1"/>
</dbReference>
<dbReference type="SMR" id="P0ABV0"/>
<dbReference type="STRING" id="155864.Z0905"/>
<dbReference type="GeneID" id="917505"/>
<dbReference type="GeneID" id="93776747"/>
<dbReference type="KEGG" id="ece:Z0905"/>
<dbReference type="KEGG" id="ecs:ECs_0772"/>
<dbReference type="PATRIC" id="fig|386585.9.peg.891"/>
<dbReference type="eggNOG" id="COG0811">
    <property type="taxonomic scope" value="Bacteria"/>
</dbReference>
<dbReference type="HOGENOM" id="CLU_053325_2_2_6"/>
<dbReference type="OMA" id="SWTYIFR"/>
<dbReference type="Proteomes" id="UP000000558">
    <property type="component" value="Chromosome"/>
</dbReference>
<dbReference type="Proteomes" id="UP000002519">
    <property type="component" value="Chromosome"/>
</dbReference>
<dbReference type="GO" id="GO:0005886">
    <property type="term" value="C:plasma membrane"/>
    <property type="evidence" value="ECO:0007669"/>
    <property type="project" value="UniProtKB-SubCell"/>
</dbReference>
<dbReference type="GO" id="GO:0043213">
    <property type="term" value="P:bacteriocin transport"/>
    <property type="evidence" value="ECO:0007669"/>
    <property type="project" value="InterPro"/>
</dbReference>
<dbReference type="GO" id="GO:0051301">
    <property type="term" value="P:cell division"/>
    <property type="evidence" value="ECO:0007669"/>
    <property type="project" value="UniProtKB-UniRule"/>
</dbReference>
<dbReference type="GO" id="GO:0017038">
    <property type="term" value="P:protein import"/>
    <property type="evidence" value="ECO:0007669"/>
    <property type="project" value="TreeGrafter"/>
</dbReference>
<dbReference type="HAMAP" id="MF_02202">
    <property type="entry name" value="TolQ"/>
    <property type="match status" value="1"/>
</dbReference>
<dbReference type="InterPro" id="IPR050790">
    <property type="entry name" value="ExbB/TolQ_transport"/>
</dbReference>
<dbReference type="InterPro" id="IPR002898">
    <property type="entry name" value="MotA_ExbB_proton_chnl"/>
</dbReference>
<dbReference type="InterPro" id="IPR014163">
    <property type="entry name" value="Tol-Pal_TolQ"/>
</dbReference>
<dbReference type="NCBIfam" id="NF008066">
    <property type="entry name" value="PRK10801.1"/>
    <property type="match status" value="1"/>
</dbReference>
<dbReference type="NCBIfam" id="TIGR02796">
    <property type="entry name" value="tolQ"/>
    <property type="match status" value="1"/>
</dbReference>
<dbReference type="PANTHER" id="PTHR30625">
    <property type="entry name" value="PROTEIN TOLQ"/>
    <property type="match status" value="1"/>
</dbReference>
<dbReference type="PANTHER" id="PTHR30625:SF3">
    <property type="entry name" value="TOL-PAL SYSTEM PROTEIN TOLQ"/>
    <property type="match status" value="1"/>
</dbReference>
<dbReference type="Pfam" id="PF01618">
    <property type="entry name" value="MotA_ExbB"/>
    <property type="match status" value="1"/>
</dbReference>
<evidence type="ECO:0000255" key="1">
    <source>
        <dbReference type="HAMAP-Rule" id="MF_02202"/>
    </source>
</evidence>
<evidence type="ECO:0000305" key="2"/>
<gene>
    <name evidence="1" type="primary">tolQ</name>
    <name type="ordered locus">Z0905</name>
    <name type="ordered locus">ECs0772</name>
</gene>
<sequence length="230" mass="25598">MTDMNILDLFLKASLLVKLIMLILIGFSIASWAIIIQRTRILNAAAREAEAFEDKFWSGIELSRLYQESQGKRDNLTGSEQIFYSGFKEFVRLHRANSHAPEAVVEGASRAMRISMNRELENLETHIPFLGTVGSISPYIGLFGTVWGIMHAFIALGAVKQATLQMVAPGIAEALIATAIGLFAAIPAVMAYNRLNQRVNKLELNYDNFMEEFTAILHRQAFTVSESNKG</sequence>
<protein>
    <recommendedName>
        <fullName evidence="1">Tol-Pal system protein TolQ</fullName>
    </recommendedName>
</protein>